<comment type="function">
    <text evidence="1">Binds directly to 16S ribosomal RNA.</text>
</comment>
<comment type="similarity">
    <text evidence="1">Belongs to the bacterial ribosomal protein bS20 family.</text>
</comment>
<sequence length="89" mass="9871">MANIKSQIKRNLTNEKRRLRNKAVKSELKTHVRRFRDAVDAGDVERAGETLRIASRKLDKAVSKGVIHANQAANKKSALARTHANLAAS</sequence>
<reference key="1">
    <citation type="journal article" date="2007" name="Genome Res.">
        <title>Genome characteristics of facultatively symbiotic Frankia sp. strains reflect host range and host plant biogeography.</title>
        <authorList>
            <person name="Normand P."/>
            <person name="Lapierre P."/>
            <person name="Tisa L.S."/>
            <person name="Gogarten J.P."/>
            <person name="Alloisio N."/>
            <person name="Bagnarol E."/>
            <person name="Bassi C.A."/>
            <person name="Berry A.M."/>
            <person name="Bickhart D.M."/>
            <person name="Choisne N."/>
            <person name="Couloux A."/>
            <person name="Cournoyer B."/>
            <person name="Cruveiller S."/>
            <person name="Daubin V."/>
            <person name="Demange N."/>
            <person name="Francino M.P."/>
            <person name="Goltsman E."/>
            <person name="Huang Y."/>
            <person name="Kopp O.R."/>
            <person name="Labarre L."/>
            <person name="Lapidus A."/>
            <person name="Lavire C."/>
            <person name="Marechal J."/>
            <person name="Martinez M."/>
            <person name="Mastronunzio J.E."/>
            <person name="Mullin B.C."/>
            <person name="Niemann J."/>
            <person name="Pujic P."/>
            <person name="Rawnsley T."/>
            <person name="Rouy Z."/>
            <person name="Schenowitz C."/>
            <person name="Sellstedt A."/>
            <person name="Tavares F."/>
            <person name="Tomkins J.P."/>
            <person name="Vallenet D."/>
            <person name="Valverde C."/>
            <person name="Wall L.G."/>
            <person name="Wang Y."/>
            <person name="Medigue C."/>
            <person name="Benson D.R."/>
        </authorList>
    </citation>
    <scope>NUCLEOTIDE SEQUENCE [LARGE SCALE GENOMIC DNA]</scope>
    <source>
        <strain>DSM 45818 / CECT 9043 / HFP020203 / CcI3</strain>
    </source>
</reference>
<protein>
    <recommendedName>
        <fullName evidence="1">Small ribosomal subunit protein bS20</fullName>
    </recommendedName>
    <alternativeName>
        <fullName evidence="3">30S ribosomal protein S20</fullName>
    </alternativeName>
</protein>
<evidence type="ECO:0000255" key="1">
    <source>
        <dbReference type="HAMAP-Rule" id="MF_00500"/>
    </source>
</evidence>
<evidence type="ECO:0000256" key="2">
    <source>
        <dbReference type="SAM" id="MobiDB-lite"/>
    </source>
</evidence>
<evidence type="ECO:0000305" key="3"/>
<name>RS20_FRACC</name>
<organism>
    <name type="scientific">Frankia casuarinae (strain DSM 45818 / CECT 9043 / HFP020203 / CcI3)</name>
    <dbReference type="NCBI Taxonomy" id="106370"/>
    <lineage>
        <taxon>Bacteria</taxon>
        <taxon>Bacillati</taxon>
        <taxon>Actinomycetota</taxon>
        <taxon>Actinomycetes</taxon>
        <taxon>Frankiales</taxon>
        <taxon>Frankiaceae</taxon>
        <taxon>Frankia</taxon>
    </lineage>
</organism>
<proteinExistence type="inferred from homology"/>
<accession>Q2JDK3</accession>
<gene>
    <name evidence="1" type="primary">rpsT</name>
    <name type="ordered locus">Francci3_1261</name>
</gene>
<keyword id="KW-1185">Reference proteome</keyword>
<keyword id="KW-0687">Ribonucleoprotein</keyword>
<keyword id="KW-0689">Ribosomal protein</keyword>
<keyword id="KW-0694">RNA-binding</keyword>
<keyword id="KW-0699">rRNA-binding</keyword>
<dbReference type="EMBL" id="CP000249">
    <property type="protein sequence ID" value="ABD10639.1"/>
    <property type="molecule type" value="Genomic_DNA"/>
</dbReference>
<dbReference type="RefSeq" id="WP_011435705.1">
    <property type="nucleotide sequence ID" value="NZ_MSEA01000065.1"/>
</dbReference>
<dbReference type="SMR" id="Q2JDK3"/>
<dbReference type="STRING" id="106370.Francci3_1261"/>
<dbReference type="KEGG" id="fra:Francci3_1261"/>
<dbReference type="eggNOG" id="COG0268">
    <property type="taxonomic scope" value="Bacteria"/>
</dbReference>
<dbReference type="HOGENOM" id="CLU_160655_0_1_11"/>
<dbReference type="OrthoDB" id="9807974at2"/>
<dbReference type="PhylomeDB" id="Q2JDK3"/>
<dbReference type="Proteomes" id="UP000001937">
    <property type="component" value="Chromosome"/>
</dbReference>
<dbReference type="GO" id="GO:0005829">
    <property type="term" value="C:cytosol"/>
    <property type="evidence" value="ECO:0007669"/>
    <property type="project" value="TreeGrafter"/>
</dbReference>
<dbReference type="GO" id="GO:0015935">
    <property type="term" value="C:small ribosomal subunit"/>
    <property type="evidence" value="ECO:0007669"/>
    <property type="project" value="TreeGrafter"/>
</dbReference>
<dbReference type="GO" id="GO:0070181">
    <property type="term" value="F:small ribosomal subunit rRNA binding"/>
    <property type="evidence" value="ECO:0007669"/>
    <property type="project" value="TreeGrafter"/>
</dbReference>
<dbReference type="GO" id="GO:0003735">
    <property type="term" value="F:structural constituent of ribosome"/>
    <property type="evidence" value="ECO:0007669"/>
    <property type="project" value="InterPro"/>
</dbReference>
<dbReference type="GO" id="GO:0006412">
    <property type="term" value="P:translation"/>
    <property type="evidence" value="ECO:0007669"/>
    <property type="project" value="UniProtKB-UniRule"/>
</dbReference>
<dbReference type="FunFam" id="1.20.58.110:FF:000001">
    <property type="entry name" value="30S ribosomal protein S20"/>
    <property type="match status" value="1"/>
</dbReference>
<dbReference type="Gene3D" id="1.20.58.110">
    <property type="entry name" value="Ribosomal protein S20"/>
    <property type="match status" value="1"/>
</dbReference>
<dbReference type="HAMAP" id="MF_00500">
    <property type="entry name" value="Ribosomal_bS20"/>
    <property type="match status" value="1"/>
</dbReference>
<dbReference type="InterPro" id="IPR002583">
    <property type="entry name" value="Ribosomal_bS20"/>
</dbReference>
<dbReference type="InterPro" id="IPR036510">
    <property type="entry name" value="Ribosomal_bS20_sf"/>
</dbReference>
<dbReference type="NCBIfam" id="TIGR00029">
    <property type="entry name" value="S20"/>
    <property type="match status" value="1"/>
</dbReference>
<dbReference type="PANTHER" id="PTHR33398">
    <property type="entry name" value="30S RIBOSOMAL PROTEIN S20"/>
    <property type="match status" value="1"/>
</dbReference>
<dbReference type="PANTHER" id="PTHR33398:SF1">
    <property type="entry name" value="SMALL RIBOSOMAL SUBUNIT PROTEIN BS20C"/>
    <property type="match status" value="1"/>
</dbReference>
<dbReference type="Pfam" id="PF01649">
    <property type="entry name" value="Ribosomal_S20p"/>
    <property type="match status" value="1"/>
</dbReference>
<dbReference type="SUPFAM" id="SSF46992">
    <property type="entry name" value="Ribosomal protein S20"/>
    <property type="match status" value="1"/>
</dbReference>
<feature type="chain" id="PRO_0000236434" description="Small ribosomal subunit protein bS20">
    <location>
        <begin position="1"/>
        <end position="89"/>
    </location>
</feature>
<feature type="region of interest" description="Disordered" evidence="2">
    <location>
        <begin position="1"/>
        <end position="22"/>
    </location>
</feature>
<feature type="compositionally biased region" description="Polar residues" evidence="2">
    <location>
        <begin position="1"/>
        <end position="11"/>
    </location>
</feature>